<evidence type="ECO:0000255" key="1">
    <source>
        <dbReference type="HAMAP-Rule" id="MF_00362"/>
    </source>
</evidence>
<evidence type="ECO:0000305" key="2"/>
<accession>B1HMZ9</accession>
<organism>
    <name type="scientific">Lysinibacillus sphaericus (strain C3-41)</name>
    <dbReference type="NCBI Taxonomy" id="444177"/>
    <lineage>
        <taxon>Bacteria</taxon>
        <taxon>Bacillati</taxon>
        <taxon>Bacillota</taxon>
        <taxon>Bacilli</taxon>
        <taxon>Bacillales</taxon>
        <taxon>Bacillaceae</taxon>
        <taxon>Lysinibacillus</taxon>
    </lineage>
</organism>
<reference key="1">
    <citation type="journal article" date="2008" name="J. Bacteriol.">
        <title>Complete genome sequence of the mosquitocidal bacterium Bacillus sphaericus C3-41 and comparison with those of closely related Bacillus species.</title>
        <authorList>
            <person name="Hu X."/>
            <person name="Fan W."/>
            <person name="Han B."/>
            <person name="Liu H."/>
            <person name="Zheng D."/>
            <person name="Li Q."/>
            <person name="Dong W."/>
            <person name="Yan J."/>
            <person name="Gao M."/>
            <person name="Berry C."/>
            <person name="Yuan Z."/>
        </authorList>
    </citation>
    <scope>NUCLEOTIDE SEQUENCE [LARGE SCALE GENOMIC DNA]</scope>
    <source>
        <strain>C3-41</strain>
    </source>
</reference>
<keyword id="KW-0687">Ribonucleoprotein</keyword>
<keyword id="KW-0689">Ribosomal protein</keyword>
<keyword id="KW-0694">RNA-binding</keyword>
<keyword id="KW-0699">rRNA-binding</keyword>
<name>RL10_LYSSC</name>
<protein>
    <recommendedName>
        <fullName evidence="1">Large ribosomal subunit protein uL10</fullName>
    </recommendedName>
    <alternativeName>
        <fullName evidence="2">50S ribosomal protein L10</fullName>
    </alternativeName>
</protein>
<dbReference type="EMBL" id="CP000817">
    <property type="protein sequence ID" value="ACA42077.1"/>
    <property type="molecule type" value="Genomic_DNA"/>
</dbReference>
<dbReference type="RefSeq" id="WP_012296080.1">
    <property type="nucleotide sequence ID" value="NC_010382.1"/>
</dbReference>
<dbReference type="SMR" id="B1HMZ9"/>
<dbReference type="EnsemblBacteria" id="ACA42077">
    <property type="protein sequence ID" value="ACA42077"/>
    <property type="gene ID" value="Bsph_4633"/>
</dbReference>
<dbReference type="KEGG" id="lsp:Bsph_4633"/>
<dbReference type="HOGENOM" id="CLU_092227_2_0_9"/>
<dbReference type="Proteomes" id="UP000002164">
    <property type="component" value="Chromosome"/>
</dbReference>
<dbReference type="GO" id="GO:0015934">
    <property type="term" value="C:large ribosomal subunit"/>
    <property type="evidence" value="ECO:0007669"/>
    <property type="project" value="InterPro"/>
</dbReference>
<dbReference type="GO" id="GO:0070180">
    <property type="term" value="F:large ribosomal subunit rRNA binding"/>
    <property type="evidence" value="ECO:0007669"/>
    <property type="project" value="UniProtKB-UniRule"/>
</dbReference>
<dbReference type="GO" id="GO:0003735">
    <property type="term" value="F:structural constituent of ribosome"/>
    <property type="evidence" value="ECO:0007669"/>
    <property type="project" value="InterPro"/>
</dbReference>
<dbReference type="GO" id="GO:0006412">
    <property type="term" value="P:translation"/>
    <property type="evidence" value="ECO:0007669"/>
    <property type="project" value="UniProtKB-UniRule"/>
</dbReference>
<dbReference type="CDD" id="cd05797">
    <property type="entry name" value="Ribosomal_L10"/>
    <property type="match status" value="1"/>
</dbReference>
<dbReference type="FunFam" id="3.30.70.1730:FF:000001">
    <property type="entry name" value="50S ribosomal protein L10"/>
    <property type="match status" value="1"/>
</dbReference>
<dbReference type="Gene3D" id="3.30.70.1730">
    <property type="match status" value="1"/>
</dbReference>
<dbReference type="Gene3D" id="6.10.250.290">
    <property type="match status" value="1"/>
</dbReference>
<dbReference type="HAMAP" id="MF_00362">
    <property type="entry name" value="Ribosomal_uL10"/>
    <property type="match status" value="1"/>
</dbReference>
<dbReference type="InterPro" id="IPR001790">
    <property type="entry name" value="Ribosomal_uL10"/>
</dbReference>
<dbReference type="InterPro" id="IPR043141">
    <property type="entry name" value="Ribosomal_uL10-like_sf"/>
</dbReference>
<dbReference type="InterPro" id="IPR022973">
    <property type="entry name" value="Ribosomal_uL10_bac"/>
</dbReference>
<dbReference type="InterPro" id="IPR047865">
    <property type="entry name" value="Ribosomal_uL10_bac_type"/>
</dbReference>
<dbReference type="InterPro" id="IPR002363">
    <property type="entry name" value="Ribosomal_uL10_CS_bac"/>
</dbReference>
<dbReference type="NCBIfam" id="NF000955">
    <property type="entry name" value="PRK00099.1-1"/>
    <property type="match status" value="1"/>
</dbReference>
<dbReference type="PANTHER" id="PTHR11560">
    <property type="entry name" value="39S RIBOSOMAL PROTEIN L10, MITOCHONDRIAL"/>
    <property type="match status" value="1"/>
</dbReference>
<dbReference type="Pfam" id="PF00466">
    <property type="entry name" value="Ribosomal_L10"/>
    <property type="match status" value="1"/>
</dbReference>
<dbReference type="SUPFAM" id="SSF160369">
    <property type="entry name" value="Ribosomal protein L10-like"/>
    <property type="match status" value="1"/>
</dbReference>
<dbReference type="PROSITE" id="PS01109">
    <property type="entry name" value="RIBOSOMAL_L10"/>
    <property type="match status" value="1"/>
</dbReference>
<gene>
    <name evidence="1" type="primary">rplJ</name>
    <name type="ordered locus">Bsph_4633</name>
</gene>
<feature type="chain" id="PRO_1000120984" description="Large ribosomal subunit protein uL10">
    <location>
        <begin position="1"/>
        <end position="166"/>
    </location>
</feature>
<sequence>MSKAIENKQVQVQEITEKFQNASSVVVVDYRGLNVAQVTELRKQLREAGVEFKVYKNTLTRRAAEAAGLEGINDVLVGPNAIAFSNEDVVAPAKIINEFAKKNEALEIKAGIIEGTISSVEDVKALAELPSREGLLSMLLSVLQAPVRNFALATKAVADQKEEQGA</sequence>
<proteinExistence type="inferred from homology"/>
<comment type="function">
    <text evidence="1">Forms part of the ribosomal stalk, playing a central role in the interaction of the ribosome with GTP-bound translation factors.</text>
</comment>
<comment type="subunit">
    <text evidence="1">Part of the ribosomal stalk of the 50S ribosomal subunit. The N-terminus interacts with L11 and the large rRNA to form the base of the stalk. The C-terminus forms an elongated spine to which L12 dimers bind in a sequential fashion forming a multimeric L10(L12)X complex.</text>
</comment>
<comment type="similarity">
    <text evidence="1">Belongs to the universal ribosomal protein uL10 family.</text>
</comment>